<sequence>MPTINQLVRKPRQSKIKKSDSPALNKGFNSKKKKFTDLNSPQKRGVCTRVGTMTPKKPNSALRKYARVRLSNNIEINAYIPGIGHNLQEHSVVLVRGGRVKDLPGVRYHIVRGALDTSGVDGRRQGRSLYGTKKPKN</sequence>
<reference key="1">
    <citation type="journal article" date="2002" name="Lancet">
        <title>Genome and virulence determinants of high virulence community-acquired MRSA.</title>
        <authorList>
            <person name="Baba T."/>
            <person name="Takeuchi F."/>
            <person name="Kuroda M."/>
            <person name="Yuzawa H."/>
            <person name="Aoki K."/>
            <person name="Oguchi A."/>
            <person name="Nagai Y."/>
            <person name="Iwama N."/>
            <person name="Asano K."/>
            <person name="Naimi T."/>
            <person name="Kuroda H."/>
            <person name="Cui L."/>
            <person name="Yamamoto K."/>
            <person name="Hiramatsu K."/>
        </authorList>
    </citation>
    <scope>NUCLEOTIDE SEQUENCE [LARGE SCALE GENOMIC DNA]</scope>
    <source>
        <strain>MW2</strain>
    </source>
</reference>
<proteinExistence type="inferred from homology"/>
<name>RS12_STAAW</name>
<feature type="chain" id="PRO_0000146311" description="Small ribosomal subunit protein uS12">
    <location>
        <begin position="1"/>
        <end position="137"/>
    </location>
</feature>
<feature type="region of interest" description="Disordered" evidence="3">
    <location>
        <begin position="1"/>
        <end position="55"/>
    </location>
</feature>
<feature type="region of interest" description="Disordered" evidence="3">
    <location>
        <begin position="118"/>
        <end position="137"/>
    </location>
</feature>
<feature type="modified residue" description="3-methylthioaspartic acid" evidence="1">
    <location>
        <position position="102"/>
    </location>
</feature>
<comment type="function">
    <text evidence="2">With S4 and S5 plays an important role in translational accuracy.</text>
</comment>
<comment type="function">
    <text evidence="2">Interacts with and stabilizes bases of the 16S rRNA that are involved in tRNA selection in the A site and with the mRNA backbone. Located at the interface of the 30S and 50S subunits, it traverses the body of the 30S subunit contacting proteins on the other side and probably holding the rRNA structure together. The combined cluster of proteins S8, S12 and S17 appears to hold together the shoulder and platform of the 30S subunit.</text>
</comment>
<comment type="subunit">
    <text evidence="2">Part of the 30S ribosomal subunit. Contacts proteins S8 and S17. May interact with IF1 in the 30S initiation complex.</text>
</comment>
<comment type="similarity">
    <text evidence="2">Belongs to the universal ribosomal protein uS12 family.</text>
</comment>
<dbReference type="EMBL" id="BA000033">
    <property type="protein sequence ID" value="BAB94365.1"/>
    <property type="molecule type" value="Genomic_DNA"/>
</dbReference>
<dbReference type="RefSeq" id="WP_001142337.1">
    <property type="nucleotide sequence ID" value="NC_003923.1"/>
</dbReference>
<dbReference type="SMR" id="P0A0G9"/>
<dbReference type="GeneID" id="98344879"/>
<dbReference type="KEGG" id="sam:MW0500"/>
<dbReference type="HOGENOM" id="CLU_104295_1_2_9"/>
<dbReference type="GO" id="GO:0015935">
    <property type="term" value="C:small ribosomal subunit"/>
    <property type="evidence" value="ECO:0007669"/>
    <property type="project" value="InterPro"/>
</dbReference>
<dbReference type="GO" id="GO:0019843">
    <property type="term" value="F:rRNA binding"/>
    <property type="evidence" value="ECO:0007669"/>
    <property type="project" value="UniProtKB-UniRule"/>
</dbReference>
<dbReference type="GO" id="GO:0003735">
    <property type="term" value="F:structural constituent of ribosome"/>
    <property type="evidence" value="ECO:0007669"/>
    <property type="project" value="InterPro"/>
</dbReference>
<dbReference type="GO" id="GO:0000049">
    <property type="term" value="F:tRNA binding"/>
    <property type="evidence" value="ECO:0007669"/>
    <property type="project" value="UniProtKB-UniRule"/>
</dbReference>
<dbReference type="GO" id="GO:0006412">
    <property type="term" value="P:translation"/>
    <property type="evidence" value="ECO:0007669"/>
    <property type="project" value="UniProtKB-UniRule"/>
</dbReference>
<dbReference type="CDD" id="cd03368">
    <property type="entry name" value="Ribosomal_S12"/>
    <property type="match status" value="1"/>
</dbReference>
<dbReference type="FunFam" id="2.40.50.140:FF:000001">
    <property type="entry name" value="30S ribosomal protein S12"/>
    <property type="match status" value="1"/>
</dbReference>
<dbReference type="Gene3D" id="2.40.50.140">
    <property type="entry name" value="Nucleic acid-binding proteins"/>
    <property type="match status" value="1"/>
</dbReference>
<dbReference type="HAMAP" id="MF_00403_B">
    <property type="entry name" value="Ribosomal_uS12_B"/>
    <property type="match status" value="1"/>
</dbReference>
<dbReference type="InterPro" id="IPR012340">
    <property type="entry name" value="NA-bd_OB-fold"/>
</dbReference>
<dbReference type="InterPro" id="IPR006032">
    <property type="entry name" value="Ribosomal_uS12"/>
</dbReference>
<dbReference type="InterPro" id="IPR005679">
    <property type="entry name" value="Ribosomal_uS12_bac"/>
</dbReference>
<dbReference type="NCBIfam" id="TIGR00981">
    <property type="entry name" value="rpsL_bact"/>
    <property type="match status" value="1"/>
</dbReference>
<dbReference type="PANTHER" id="PTHR11652">
    <property type="entry name" value="30S RIBOSOMAL PROTEIN S12 FAMILY MEMBER"/>
    <property type="match status" value="1"/>
</dbReference>
<dbReference type="Pfam" id="PF00164">
    <property type="entry name" value="Ribosom_S12_S23"/>
    <property type="match status" value="1"/>
</dbReference>
<dbReference type="PIRSF" id="PIRSF002133">
    <property type="entry name" value="Ribosomal_S12/S23"/>
    <property type="match status" value="1"/>
</dbReference>
<dbReference type="PRINTS" id="PR01034">
    <property type="entry name" value="RIBOSOMALS12"/>
</dbReference>
<dbReference type="SUPFAM" id="SSF50249">
    <property type="entry name" value="Nucleic acid-binding proteins"/>
    <property type="match status" value="1"/>
</dbReference>
<dbReference type="PROSITE" id="PS00055">
    <property type="entry name" value="RIBOSOMAL_S12"/>
    <property type="match status" value="1"/>
</dbReference>
<gene>
    <name evidence="2" type="primary">rpsL</name>
    <name type="ordered locus">MW0500</name>
</gene>
<accession>P0A0G9</accession>
<accession>P48942</accession>
<keyword id="KW-0488">Methylation</keyword>
<keyword id="KW-0687">Ribonucleoprotein</keyword>
<keyword id="KW-0689">Ribosomal protein</keyword>
<keyword id="KW-0694">RNA-binding</keyword>
<keyword id="KW-0699">rRNA-binding</keyword>
<keyword id="KW-0820">tRNA-binding</keyword>
<evidence type="ECO:0000250" key="1"/>
<evidence type="ECO:0000255" key="2">
    <source>
        <dbReference type="HAMAP-Rule" id="MF_00403"/>
    </source>
</evidence>
<evidence type="ECO:0000256" key="3">
    <source>
        <dbReference type="SAM" id="MobiDB-lite"/>
    </source>
</evidence>
<evidence type="ECO:0000305" key="4"/>
<protein>
    <recommendedName>
        <fullName evidence="2">Small ribosomal subunit protein uS12</fullName>
    </recommendedName>
    <alternativeName>
        <fullName evidence="4">30S ribosomal protein S12</fullName>
    </alternativeName>
</protein>
<organism>
    <name type="scientific">Staphylococcus aureus (strain MW2)</name>
    <dbReference type="NCBI Taxonomy" id="196620"/>
    <lineage>
        <taxon>Bacteria</taxon>
        <taxon>Bacillati</taxon>
        <taxon>Bacillota</taxon>
        <taxon>Bacilli</taxon>
        <taxon>Bacillales</taxon>
        <taxon>Staphylococcaceae</taxon>
        <taxon>Staphylococcus</taxon>
    </lineage>
</organism>